<name>TRPF_SULSY</name>
<sequence length="203" mass="22829">MIVKICGITLPSQAREISEYGADYIGVITYPKSPRYVDVERIKEIKEKLKNSKLVAVVVNPSLEQVLELLNIADFIQFHGDEGLDFVKNFPKDRVIKAIRVKNESDLEKIKTFKNEDITVLVDAFKEGVYGGTGEMIDLNLLKKITDMYDKVIISGGLSESNIKEILNHVKPYGVDASSKLEVSPGVKDLDKVKKFIDIVKNR</sequence>
<keyword id="KW-0028">Amino-acid biosynthesis</keyword>
<keyword id="KW-0057">Aromatic amino acid biosynthesis</keyword>
<keyword id="KW-0413">Isomerase</keyword>
<keyword id="KW-0822">Tryptophan biosynthesis</keyword>
<proteinExistence type="inferred from homology"/>
<evidence type="ECO:0000255" key="1">
    <source>
        <dbReference type="HAMAP-Rule" id="MF_00135"/>
    </source>
</evidence>
<comment type="catalytic activity">
    <reaction evidence="1">
        <text>N-(5-phospho-beta-D-ribosyl)anthranilate = 1-(2-carboxyphenylamino)-1-deoxy-D-ribulose 5-phosphate</text>
        <dbReference type="Rhea" id="RHEA:21540"/>
        <dbReference type="ChEBI" id="CHEBI:18277"/>
        <dbReference type="ChEBI" id="CHEBI:58613"/>
        <dbReference type="EC" id="5.3.1.24"/>
    </reaction>
</comment>
<comment type="pathway">
    <text evidence="1">Amino-acid biosynthesis; L-tryptophan biosynthesis; L-tryptophan from chorismate: step 3/5.</text>
</comment>
<comment type="similarity">
    <text evidence="1">Belongs to the TrpF family.</text>
</comment>
<organism>
    <name type="scientific">Sulfurihydrogenibium sp. (strain YO3AOP1)</name>
    <dbReference type="NCBI Taxonomy" id="436114"/>
    <lineage>
        <taxon>Bacteria</taxon>
        <taxon>Pseudomonadati</taxon>
        <taxon>Aquificota</taxon>
        <taxon>Aquificia</taxon>
        <taxon>Aquificales</taxon>
        <taxon>Hydrogenothermaceae</taxon>
        <taxon>Sulfurihydrogenibium</taxon>
    </lineage>
</organism>
<dbReference type="EC" id="5.3.1.24" evidence="1"/>
<dbReference type="EMBL" id="CP001080">
    <property type="protein sequence ID" value="ACD65977.1"/>
    <property type="molecule type" value="Genomic_DNA"/>
</dbReference>
<dbReference type="RefSeq" id="WP_012459063.1">
    <property type="nucleotide sequence ID" value="NC_010730.1"/>
</dbReference>
<dbReference type="SMR" id="B2V7Q4"/>
<dbReference type="STRING" id="436114.SYO3AOP1_0332"/>
<dbReference type="KEGG" id="sul:SYO3AOP1_0332"/>
<dbReference type="eggNOG" id="COG0135">
    <property type="taxonomic scope" value="Bacteria"/>
</dbReference>
<dbReference type="HOGENOM" id="CLU_076364_2_0_0"/>
<dbReference type="UniPathway" id="UPA00035">
    <property type="reaction ID" value="UER00042"/>
</dbReference>
<dbReference type="GO" id="GO:0004640">
    <property type="term" value="F:phosphoribosylanthranilate isomerase activity"/>
    <property type="evidence" value="ECO:0007669"/>
    <property type="project" value="UniProtKB-UniRule"/>
</dbReference>
<dbReference type="GO" id="GO:0000162">
    <property type="term" value="P:L-tryptophan biosynthetic process"/>
    <property type="evidence" value="ECO:0007669"/>
    <property type="project" value="UniProtKB-UniRule"/>
</dbReference>
<dbReference type="CDD" id="cd00405">
    <property type="entry name" value="PRAI"/>
    <property type="match status" value="1"/>
</dbReference>
<dbReference type="Gene3D" id="3.20.20.70">
    <property type="entry name" value="Aldolase class I"/>
    <property type="match status" value="1"/>
</dbReference>
<dbReference type="HAMAP" id="MF_00135">
    <property type="entry name" value="PRAI"/>
    <property type="match status" value="1"/>
</dbReference>
<dbReference type="InterPro" id="IPR013785">
    <property type="entry name" value="Aldolase_TIM"/>
</dbReference>
<dbReference type="InterPro" id="IPR001240">
    <property type="entry name" value="PRAI_dom"/>
</dbReference>
<dbReference type="InterPro" id="IPR011060">
    <property type="entry name" value="RibuloseP-bd_barrel"/>
</dbReference>
<dbReference type="InterPro" id="IPR044643">
    <property type="entry name" value="TrpF_fam"/>
</dbReference>
<dbReference type="PANTHER" id="PTHR42894">
    <property type="entry name" value="N-(5'-PHOSPHORIBOSYL)ANTHRANILATE ISOMERASE"/>
    <property type="match status" value="1"/>
</dbReference>
<dbReference type="PANTHER" id="PTHR42894:SF1">
    <property type="entry name" value="N-(5'-PHOSPHORIBOSYL)ANTHRANILATE ISOMERASE"/>
    <property type="match status" value="1"/>
</dbReference>
<dbReference type="Pfam" id="PF00697">
    <property type="entry name" value="PRAI"/>
    <property type="match status" value="1"/>
</dbReference>
<dbReference type="SUPFAM" id="SSF51366">
    <property type="entry name" value="Ribulose-phoshate binding barrel"/>
    <property type="match status" value="1"/>
</dbReference>
<protein>
    <recommendedName>
        <fullName evidence="1">N-(5'-phosphoribosyl)anthranilate isomerase</fullName>
        <shortName evidence="1">PRAI</shortName>
        <ecNumber evidence="1">5.3.1.24</ecNumber>
    </recommendedName>
</protein>
<accession>B2V7Q4</accession>
<reference key="1">
    <citation type="journal article" date="2009" name="J. Bacteriol.">
        <title>Complete and draft genome sequences of six members of the Aquificales.</title>
        <authorList>
            <person name="Reysenbach A.-L."/>
            <person name="Hamamura N."/>
            <person name="Podar M."/>
            <person name="Griffiths E."/>
            <person name="Ferreira S."/>
            <person name="Hochstein R."/>
            <person name="Heidelberg J."/>
            <person name="Johnson J."/>
            <person name="Mead D."/>
            <person name="Pohorille A."/>
            <person name="Sarmiento M."/>
            <person name="Schweighofer K."/>
            <person name="Seshadri R."/>
            <person name="Voytek M.A."/>
        </authorList>
    </citation>
    <scope>NUCLEOTIDE SEQUENCE [LARGE SCALE GENOMIC DNA]</scope>
    <source>
        <strain>YO3AOP1</strain>
    </source>
</reference>
<feature type="chain" id="PRO_1000197129" description="N-(5'-phosphoribosyl)anthranilate isomerase">
    <location>
        <begin position="1"/>
        <end position="203"/>
    </location>
</feature>
<gene>
    <name evidence="1" type="primary">trpF</name>
    <name type="ordered locus">SYO3AOP1_0332</name>
</gene>